<comment type="function">
    <text evidence="1">Catalyzes the reversible conversion of ribose-5-phosphate to ribulose 5-phosphate.</text>
</comment>
<comment type="catalytic activity">
    <reaction evidence="1">
        <text>aldehydo-D-ribose 5-phosphate = D-ribulose 5-phosphate</text>
        <dbReference type="Rhea" id="RHEA:14657"/>
        <dbReference type="ChEBI" id="CHEBI:58121"/>
        <dbReference type="ChEBI" id="CHEBI:58273"/>
        <dbReference type="EC" id="5.3.1.6"/>
    </reaction>
</comment>
<comment type="pathway">
    <text evidence="1">Carbohydrate degradation; pentose phosphate pathway; D-ribose 5-phosphate from D-ribulose 5-phosphate (non-oxidative stage): step 1/1.</text>
</comment>
<comment type="subunit">
    <text evidence="1">Homodimer.</text>
</comment>
<comment type="similarity">
    <text evidence="1">Belongs to the ribose 5-phosphate isomerase family.</text>
</comment>
<evidence type="ECO:0000255" key="1">
    <source>
        <dbReference type="HAMAP-Rule" id="MF_00170"/>
    </source>
</evidence>
<proteinExistence type="inferred from homology"/>
<dbReference type="EC" id="5.3.1.6" evidence="1"/>
<dbReference type="EMBL" id="AE001273">
    <property type="protein sequence ID" value="AAC67805.1"/>
    <property type="molecule type" value="Genomic_DNA"/>
</dbReference>
<dbReference type="PIR" id="D71542">
    <property type="entry name" value="D71542"/>
</dbReference>
<dbReference type="RefSeq" id="NP_219717.1">
    <property type="nucleotide sequence ID" value="NC_000117.1"/>
</dbReference>
<dbReference type="RefSeq" id="WP_009873074.1">
    <property type="nucleotide sequence ID" value="NC_000117.1"/>
</dbReference>
<dbReference type="SMR" id="O84215"/>
<dbReference type="STRING" id="272561.CT_213"/>
<dbReference type="EnsemblBacteria" id="AAC67805">
    <property type="protein sequence ID" value="AAC67805"/>
    <property type="gene ID" value="CT_213"/>
</dbReference>
<dbReference type="GeneID" id="884912"/>
<dbReference type="KEGG" id="ctr:CT_213"/>
<dbReference type="PATRIC" id="fig|272561.5.peg.228"/>
<dbReference type="HOGENOM" id="CLU_056590_1_0_0"/>
<dbReference type="InParanoid" id="O84215"/>
<dbReference type="OrthoDB" id="5870696at2"/>
<dbReference type="UniPathway" id="UPA00115">
    <property type="reaction ID" value="UER00412"/>
</dbReference>
<dbReference type="Proteomes" id="UP000000431">
    <property type="component" value="Chromosome"/>
</dbReference>
<dbReference type="GO" id="GO:0004751">
    <property type="term" value="F:ribose-5-phosphate isomerase activity"/>
    <property type="evidence" value="ECO:0007669"/>
    <property type="project" value="UniProtKB-UniRule"/>
</dbReference>
<dbReference type="GO" id="GO:0009052">
    <property type="term" value="P:pentose-phosphate shunt, non-oxidative branch"/>
    <property type="evidence" value="ECO:0007669"/>
    <property type="project" value="UniProtKB-UniRule"/>
</dbReference>
<dbReference type="CDD" id="cd01398">
    <property type="entry name" value="RPI_A"/>
    <property type="match status" value="1"/>
</dbReference>
<dbReference type="FunFam" id="3.40.50.1360:FF:000001">
    <property type="entry name" value="Ribose-5-phosphate isomerase A"/>
    <property type="match status" value="1"/>
</dbReference>
<dbReference type="Gene3D" id="3.30.70.260">
    <property type="match status" value="1"/>
</dbReference>
<dbReference type="Gene3D" id="3.40.50.1360">
    <property type="match status" value="1"/>
</dbReference>
<dbReference type="HAMAP" id="MF_00170">
    <property type="entry name" value="Rib_5P_isom_A"/>
    <property type="match status" value="1"/>
</dbReference>
<dbReference type="InterPro" id="IPR037171">
    <property type="entry name" value="NagB/RpiA_transferase-like"/>
</dbReference>
<dbReference type="InterPro" id="IPR050262">
    <property type="entry name" value="Ribose-5P_isomerase"/>
</dbReference>
<dbReference type="InterPro" id="IPR020672">
    <property type="entry name" value="Ribose5P_isomerase_typA_subgr"/>
</dbReference>
<dbReference type="InterPro" id="IPR004788">
    <property type="entry name" value="Ribose5P_isomerase_type_A"/>
</dbReference>
<dbReference type="NCBIfam" id="NF001924">
    <property type="entry name" value="PRK00702.1"/>
    <property type="match status" value="1"/>
</dbReference>
<dbReference type="NCBIfam" id="TIGR00021">
    <property type="entry name" value="rpiA"/>
    <property type="match status" value="1"/>
</dbReference>
<dbReference type="PANTHER" id="PTHR43748">
    <property type="entry name" value="RIBOSE-5-PHOSPHATE ISOMERASE 3, CHLOROPLASTIC-RELATED"/>
    <property type="match status" value="1"/>
</dbReference>
<dbReference type="PANTHER" id="PTHR43748:SF3">
    <property type="entry name" value="RIBOSE-5-PHOSPHATE ISOMERASE 3, CHLOROPLASTIC-RELATED"/>
    <property type="match status" value="1"/>
</dbReference>
<dbReference type="Pfam" id="PF06026">
    <property type="entry name" value="Rib_5-P_isom_A"/>
    <property type="match status" value="1"/>
</dbReference>
<dbReference type="SUPFAM" id="SSF75445">
    <property type="entry name" value="D-ribose-5-phosphate isomerase (RpiA), lid domain"/>
    <property type="match status" value="1"/>
</dbReference>
<dbReference type="SUPFAM" id="SSF100950">
    <property type="entry name" value="NagB/RpiA/CoA transferase-like"/>
    <property type="match status" value="1"/>
</dbReference>
<organism>
    <name type="scientific">Chlamydia trachomatis serovar D (strain ATCC VR-885 / DSM 19411 / UW-3/Cx)</name>
    <dbReference type="NCBI Taxonomy" id="272561"/>
    <lineage>
        <taxon>Bacteria</taxon>
        <taxon>Pseudomonadati</taxon>
        <taxon>Chlamydiota</taxon>
        <taxon>Chlamydiia</taxon>
        <taxon>Chlamydiales</taxon>
        <taxon>Chlamydiaceae</taxon>
        <taxon>Chlamydia/Chlamydophila group</taxon>
        <taxon>Chlamydia</taxon>
    </lineage>
</organism>
<keyword id="KW-0413">Isomerase</keyword>
<keyword id="KW-1185">Reference proteome</keyword>
<accession>O84215</accession>
<protein>
    <recommendedName>
        <fullName evidence="1">Ribose-5-phosphate isomerase A</fullName>
        <ecNumber evidence="1">5.3.1.6</ecNumber>
    </recommendedName>
    <alternativeName>
        <fullName evidence="1">Phosphoriboisomerase A</fullName>
        <shortName evidence="1">PRI</shortName>
    </alternativeName>
</protein>
<feature type="chain" id="PRO_0000158408" description="Ribose-5-phosphate isomerase A">
    <location>
        <begin position="1"/>
        <end position="242"/>
    </location>
</feature>
<feature type="active site" description="Proton acceptor" evidence="1">
    <location>
        <position position="117"/>
    </location>
</feature>
<feature type="binding site" evidence="1">
    <location>
        <begin position="39"/>
        <end position="42"/>
    </location>
    <ligand>
        <name>substrate</name>
    </ligand>
</feature>
<feature type="binding site" evidence="1">
    <location>
        <begin position="95"/>
        <end position="98"/>
    </location>
    <ligand>
        <name>substrate</name>
    </ligand>
</feature>
<feature type="binding site" evidence="1">
    <location>
        <begin position="108"/>
        <end position="111"/>
    </location>
    <ligand>
        <name>substrate</name>
    </ligand>
</feature>
<feature type="binding site" evidence="1">
    <location>
        <position position="135"/>
    </location>
    <ligand>
        <name>substrate</name>
    </ligand>
</feature>
<gene>
    <name evidence="1" type="primary">rpiA</name>
    <name type="ordered locus">CT_213</name>
</gene>
<reference key="1">
    <citation type="journal article" date="1998" name="Science">
        <title>Genome sequence of an obligate intracellular pathogen of humans: Chlamydia trachomatis.</title>
        <authorList>
            <person name="Stephens R.S."/>
            <person name="Kalman S."/>
            <person name="Lammel C.J."/>
            <person name="Fan J."/>
            <person name="Marathe R."/>
            <person name="Aravind L."/>
            <person name="Mitchell W.P."/>
            <person name="Olinger L."/>
            <person name="Tatusov R.L."/>
            <person name="Zhao Q."/>
            <person name="Koonin E.V."/>
            <person name="Davis R.W."/>
        </authorList>
    </citation>
    <scope>NUCLEOTIDE SEQUENCE [LARGE SCALE GENOMIC DNA]</scope>
    <source>
        <strain>ATCC VR-885 / DSM 19411 / UW-3/Cx</strain>
    </source>
</reference>
<sequence>MSKQPENSFSSDKFFPIKQKLALEAVALVEPGMCVGLGSGSTAREFILALGDRVRTERLVITAVASSRISQLLAEAVGIPLSDHSLLQDVDLVVDGADEVDPCLRMIKGGGGALFREKILLQSGKRNVILVDERKLVPTLGKFSLPIEIAPFGCSSVQRILNKQGYFGEWRETSAGERFITDNGNYIYDVRTPDSYANPEEDMIRLLQIRGIIDVGFVIAKAEVWVGYADGSIVRKKEHNEY</sequence>
<name>RPIA_CHLTR</name>